<sequence length="206" mass="23097">MLNAAAADRNKDPILSVLKSRVASNRRLFALEISSGTGQHVVHFAKAFPNITWQPSEVETQSLSSIEAYRQYHRLQNVQPPIYLDVSQSWQTWGGFPAESCDLIININMMHISPLACTTGLFHGVGQILKPQGLLLTYGPYAFNGSIVPQSNFDFDQSLRYRNPEWGLRDASFLTTLGQENGLRLEEIVDMPANNKCLLFRKDSVV</sequence>
<organism>
    <name type="scientific">Danio rerio</name>
    <name type="common">Zebrafish</name>
    <name type="synonym">Brachydanio rerio</name>
    <dbReference type="NCBI Taxonomy" id="7955"/>
    <lineage>
        <taxon>Eukaryota</taxon>
        <taxon>Metazoa</taxon>
        <taxon>Chordata</taxon>
        <taxon>Craniata</taxon>
        <taxon>Vertebrata</taxon>
        <taxon>Euteleostomi</taxon>
        <taxon>Actinopterygii</taxon>
        <taxon>Neopterygii</taxon>
        <taxon>Teleostei</taxon>
        <taxon>Ostariophysi</taxon>
        <taxon>Cypriniformes</taxon>
        <taxon>Danionidae</taxon>
        <taxon>Danioninae</taxon>
        <taxon>Danio</taxon>
    </lineage>
</organism>
<name>MTL26_DANRE</name>
<dbReference type="EMBL" id="AY423021">
    <property type="protein sequence ID" value="AAQ97997.1"/>
    <property type="status" value="ALT_INIT"/>
    <property type="molecule type" value="mRNA"/>
</dbReference>
<dbReference type="EMBL" id="BC045517">
    <property type="protein sequence ID" value="AAH45517.2"/>
    <property type="status" value="ALT_INIT"/>
    <property type="molecule type" value="mRNA"/>
</dbReference>
<dbReference type="RefSeq" id="NP_956410.1">
    <property type="nucleotide sequence ID" value="NM_200116.1"/>
</dbReference>
<dbReference type="SMR" id="Q7ZVJ8"/>
<dbReference type="FunCoup" id="Q7ZVJ8">
    <property type="interactions" value="92"/>
</dbReference>
<dbReference type="PaxDb" id="7955-ENSDARP00000038472"/>
<dbReference type="DNASU" id="386899"/>
<dbReference type="GeneID" id="386899"/>
<dbReference type="KEGG" id="dre:386899"/>
<dbReference type="AGR" id="ZFIN:ZDB-GENE-031118-200"/>
<dbReference type="CTD" id="84326"/>
<dbReference type="ZFIN" id="ZDB-GENE-031118-200">
    <property type="gene designation" value="mettl26"/>
</dbReference>
<dbReference type="eggNOG" id="ENOG502QVX9">
    <property type="taxonomic scope" value="Eukaryota"/>
</dbReference>
<dbReference type="InParanoid" id="Q7ZVJ8"/>
<dbReference type="OrthoDB" id="10258744at2759"/>
<dbReference type="PRO" id="PR:Q7ZVJ8"/>
<dbReference type="Proteomes" id="UP000000437">
    <property type="component" value="Chromosome 3"/>
</dbReference>
<dbReference type="Gene3D" id="3.40.50.150">
    <property type="entry name" value="Vaccinia Virus protein VP39"/>
    <property type="match status" value="1"/>
</dbReference>
<dbReference type="InterPro" id="IPR010342">
    <property type="entry name" value="DUF938"/>
</dbReference>
<dbReference type="InterPro" id="IPR029063">
    <property type="entry name" value="SAM-dependent_MTases_sf"/>
</dbReference>
<dbReference type="PANTHER" id="PTHR20974:SF2">
    <property type="entry name" value="METHYLTRANSFERASE-LIKE 26"/>
    <property type="match status" value="1"/>
</dbReference>
<dbReference type="PANTHER" id="PTHR20974">
    <property type="entry name" value="UPF0585 PROTEIN CG18661"/>
    <property type="match status" value="1"/>
</dbReference>
<dbReference type="Pfam" id="PF06080">
    <property type="entry name" value="DUF938"/>
    <property type="match status" value="1"/>
</dbReference>
<dbReference type="SUPFAM" id="SSF53335">
    <property type="entry name" value="S-adenosyl-L-methionine-dependent methyltransferases"/>
    <property type="match status" value="1"/>
</dbReference>
<proteinExistence type="evidence at transcript level"/>
<gene>
    <name evidence="1" type="primary">mettl26</name>
    <name type="ORF">zgc:56719</name>
</gene>
<accession>Q7ZVJ8</accession>
<accession>Q6TEM8</accession>
<protein>
    <recommendedName>
        <fullName evidence="1">Methyltransferase-like 26</fullName>
    </recommendedName>
</protein>
<keyword id="KW-1185">Reference proteome</keyword>
<comment type="similarity">
    <text evidence="2">Belongs to the UPF0585 family.</text>
</comment>
<comment type="sequence caution" evidence="2">
    <conflict type="erroneous initiation">
        <sequence resource="EMBL-CDS" id="AAH45517"/>
    </conflict>
    <text>Extended N-terminus.</text>
</comment>
<comment type="sequence caution" evidence="2">
    <conflict type="erroneous initiation">
        <sequence resource="EMBL-CDS" id="AAQ97997"/>
    </conflict>
    <text>Extended N-terminus.</text>
</comment>
<reference key="1">
    <citation type="journal article" date="2004" name="Proc. Natl. Acad. Sci. U.S.A.">
        <title>Hematopoietic gene expression profile in zebrafish kidney marrow.</title>
        <authorList>
            <person name="Song H.-D."/>
            <person name="Sun X.-J."/>
            <person name="Deng M."/>
            <person name="Zhang G.-W."/>
            <person name="Zhou Y."/>
            <person name="Wu X.-Y."/>
            <person name="Sheng Y."/>
            <person name="Chen Y."/>
            <person name="Ruan Z."/>
            <person name="Jiang C.-L."/>
            <person name="Fan H.-Y."/>
            <person name="Zon L.I."/>
            <person name="Kanki J.P."/>
            <person name="Liu T.X."/>
            <person name="Look A.T."/>
            <person name="Chen Z."/>
        </authorList>
    </citation>
    <scope>NUCLEOTIDE SEQUENCE [LARGE SCALE MRNA]</scope>
    <source>
        <tissue>Kidney marrow</tissue>
    </source>
</reference>
<reference key="2">
    <citation type="submission" date="2003-01" db="EMBL/GenBank/DDBJ databases">
        <authorList>
            <consortium name="NIH - Zebrafish Gene Collection (ZGC) project"/>
        </authorList>
    </citation>
    <scope>NUCLEOTIDE SEQUENCE [LARGE SCALE MRNA]</scope>
    <source>
        <strain>AB</strain>
    </source>
</reference>
<feature type="chain" id="PRO_0000337117" description="Methyltransferase-like 26">
    <location>
        <begin position="1"/>
        <end position="206"/>
    </location>
</feature>
<feature type="sequence conflict" description="In Ref. 2; AAQ97997." evidence="2" ref="2">
    <original>A</original>
    <variation>T</variation>
    <location>
        <position position="193"/>
    </location>
</feature>
<evidence type="ECO:0000250" key="1">
    <source>
        <dbReference type="UniProtKB" id="Q96S19"/>
    </source>
</evidence>
<evidence type="ECO:0000305" key="2"/>